<feature type="chain" id="PRO_1000136951" description="Cell division protein ZapD">
    <location>
        <begin position="1"/>
        <end position="247"/>
    </location>
</feature>
<dbReference type="EMBL" id="AM933173">
    <property type="protein sequence ID" value="CAR36049.1"/>
    <property type="molecule type" value="Genomic_DNA"/>
</dbReference>
<dbReference type="RefSeq" id="WP_000557441.1">
    <property type="nucleotide sequence ID" value="NC_011274.1"/>
</dbReference>
<dbReference type="SMR" id="B5RH77"/>
<dbReference type="KEGG" id="seg:SG0141"/>
<dbReference type="HOGENOM" id="CLU_076303_0_0_6"/>
<dbReference type="Proteomes" id="UP000008321">
    <property type="component" value="Chromosome"/>
</dbReference>
<dbReference type="GO" id="GO:0032153">
    <property type="term" value="C:cell division site"/>
    <property type="evidence" value="ECO:0007669"/>
    <property type="project" value="TreeGrafter"/>
</dbReference>
<dbReference type="GO" id="GO:0005737">
    <property type="term" value="C:cytoplasm"/>
    <property type="evidence" value="ECO:0007669"/>
    <property type="project" value="UniProtKB-SubCell"/>
</dbReference>
<dbReference type="GO" id="GO:0000917">
    <property type="term" value="P:division septum assembly"/>
    <property type="evidence" value="ECO:0007669"/>
    <property type="project" value="UniProtKB-KW"/>
</dbReference>
<dbReference type="GO" id="GO:0043093">
    <property type="term" value="P:FtsZ-dependent cytokinesis"/>
    <property type="evidence" value="ECO:0007669"/>
    <property type="project" value="UniProtKB-UniRule"/>
</dbReference>
<dbReference type="FunFam" id="1.10.3900.10:FF:000001">
    <property type="entry name" value="Cell division protein ZapD"/>
    <property type="match status" value="1"/>
</dbReference>
<dbReference type="FunFam" id="2.60.440.10:FF:000001">
    <property type="entry name" value="Cell division protein ZapD"/>
    <property type="match status" value="1"/>
</dbReference>
<dbReference type="Gene3D" id="1.10.3900.10">
    <property type="entry name" value="YacF-like"/>
    <property type="match status" value="1"/>
</dbReference>
<dbReference type="Gene3D" id="2.60.440.10">
    <property type="entry name" value="YacF-like domains"/>
    <property type="match status" value="1"/>
</dbReference>
<dbReference type="HAMAP" id="MF_01092">
    <property type="entry name" value="ZapD"/>
    <property type="match status" value="1"/>
</dbReference>
<dbReference type="InterPro" id="IPR009777">
    <property type="entry name" value="ZapD"/>
</dbReference>
<dbReference type="InterPro" id="IPR027462">
    <property type="entry name" value="ZapD_C"/>
</dbReference>
<dbReference type="InterPro" id="IPR036268">
    <property type="entry name" value="ZapD_sf"/>
</dbReference>
<dbReference type="NCBIfam" id="NF003653">
    <property type="entry name" value="PRK05287.1-1"/>
    <property type="match status" value="1"/>
</dbReference>
<dbReference type="NCBIfam" id="NF003655">
    <property type="entry name" value="PRK05287.1-3"/>
    <property type="match status" value="1"/>
</dbReference>
<dbReference type="PANTHER" id="PTHR39455">
    <property type="entry name" value="CELL DIVISION PROTEIN ZAPD"/>
    <property type="match status" value="1"/>
</dbReference>
<dbReference type="PANTHER" id="PTHR39455:SF1">
    <property type="entry name" value="CELL DIVISION PROTEIN ZAPD"/>
    <property type="match status" value="1"/>
</dbReference>
<dbReference type="Pfam" id="PF07072">
    <property type="entry name" value="ZapD"/>
    <property type="match status" value="1"/>
</dbReference>
<dbReference type="SUPFAM" id="SSF160950">
    <property type="entry name" value="YacF-like"/>
    <property type="match status" value="1"/>
</dbReference>
<sequence length="247" mass="28426">MHTQVLFEHPLNEKMRTWLRIEFLIQQLSINLPIADHAGALHFFRNISDLLDVFERGEVRTELLKELERQQRKLQAWVEVPGVDQDRIEALRQQLKSAGSVLISAPRIGQQLREDRLIALVRQRLSIPGGCCSFDLPTLHIWLHLQQAQRDAQIESWLASLNPLTQALTLVLDLIRNSAPFRKQTSLNGFYQDNGDDADLLRLMLTLDSQLYPQISGHKSRFAIRFMPLDSENGLVPERLDFELACC</sequence>
<protein>
    <recommendedName>
        <fullName evidence="1">Cell division protein ZapD</fullName>
    </recommendedName>
    <alternativeName>
        <fullName evidence="1">Z ring-associated protein D</fullName>
    </alternativeName>
</protein>
<gene>
    <name evidence="1" type="primary">zapD</name>
    <name type="ordered locus">SG0141</name>
</gene>
<name>ZAPD_SALG2</name>
<keyword id="KW-0131">Cell cycle</keyword>
<keyword id="KW-0132">Cell division</keyword>
<keyword id="KW-0963">Cytoplasm</keyword>
<keyword id="KW-0717">Septation</keyword>
<organism>
    <name type="scientific">Salmonella gallinarum (strain 287/91 / NCTC 13346)</name>
    <dbReference type="NCBI Taxonomy" id="550538"/>
    <lineage>
        <taxon>Bacteria</taxon>
        <taxon>Pseudomonadati</taxon>
        <taxon>Pseudomonadota</taxon>
        <taxon>Gammaproteobacteria</taxon>
        <taxon>Enterobacterales</taxon>
        <taxon>Enterobacteriaceae</taxon>
        <taxon>Salmonella</taxon>
    </lineage>
</organism>
<proteinExistence type="inferred from homology"/>
<accession>B5RH77</accession>
<evidence type="ECO:0000255" key="1">
    <source>
        <dbReference type="HAMAP-Rule" id="MF_01092"/>
    </source>
</evidence>
<comment type="function">
    <text evidence="1">Cell division factor that enhances FtsZ-ring assembly. Directly interacts with FtsZ and promotes bundling of FtsZ protofilaments, with a reduction in FtsZ GTPase activity.</text>
</comment>
<comment type="subunit">
    <text evidence="1">Interacts with FtsZ.</text>
</comment>
<comment type="subcellular location">
    <subcellularLocation>
        <location evidence="1">Cytoplasm</location>
    </subcellularLocation>
    <text evidence="1">Localizes to mid-cell in an FtsZ-dependent manner.</text>
</comment>
<comment type="similarity">
    <text evidence="1">Belongs to the ZapD family.</text>
</comment>
<reference key="1">
    <citation type="journal article" date="2008" name="Genome Res.">
        <title>Comparative genome analysis of Salmonella enteritidis PT4 and Salmonella gallinarum 287/91 provides insights into evolutionary and host adaptation pathways.</title>
        <authorList>
            <person name="Thomson N.R."/>
            <person name="Clayton D.J."/>
            <person name="Windhorst D."/>
            <person name="Vernikos G."/>
            <person name="Davidson S."/>
            <person name="Churcher C."/>
            <person name="Quail M.A."/>
            <person name="Stevens M."/>
            <person name="Jones M.A."/>
            <person name="Watson M."/>
            <person name="Barron A."/>
            <person name="Layton A."/>
            <person name="Pickard D."/>
            <person name="Kingsley R.A."/>
            <person name="Bignell A."/>
            <person name="Clark L."/>
            <person name="Harris B."/>
            <person name="Ormond D."/>
            <person name="Abdellah Z."/>
            <person name="Brooks K."/>
            <person name="Cherevach I."/>
            <person name="Chillingworth T."/>
            <person name="Woodward J."/>
            <person name="Norberczak H."/>
            <person name="Lord A."/>
            <person name="Arrowsmith C."/>
            <person name="Jagels K."/>
            <person name="Moule S."/>
            <person name="Mungall K."/>
            <person name="Saunders M."/>
            <person name="Whitehead S."/>
            <person name="Chabalgoity J.A."/>
            <person name="Maskell D."/>
            <person name="Humphreys T."/>
            <person name="Roberts M."/>
            <person name="Barrow P.A."/>
            <person name="Dougan G."/>
            <person name="Parkhill J."/>
        </authorList>
    </citation>
    <scope>NUCLEOTIDE SEQUENCE [LARGE SCALE GENOMIC DNA]</scope>
    <source>
        <strain>287/91 / NCTC 13346</strain>
    </source>
</reference>